<gene>
    <name evidence="8" type="primary">AHB1</name>
    <name type="synonym">GLB1</name>
    <name evidence="10" type="ordered locus">At2g16060</name>
    <name evidence="11" type="ORF">F7H1.8</name>
</gene>
<proteinExistence type="evidence at protein level"/>
<dbReference type="EC" id="1.7.2.-" evidence="2"/>
<dbReference type="EMBL" id="U94998">
    <property type="protein sequence ID" value="AAB82769.1"/>
    <property type="molecule type" value="Genomic_DNA"/>
</dbReference>
<dbReference type="EMBL" id="AC007134">
    <property type="protein sequence ID" value="AAD26949.1"/>
    <property type="molecule type" value="Genomic_DNA"/>
</dbReference>
<dbReference type="EMBL" id="CP002685">
    <property type="protein sequence ID" value="AEC06463.1"/>
    <property type="molecule type" value="Genomic_DNA"/>
</dbReference>
<dbReference type="EMBL" id="BT006405">
    <property type="protein sequence ID" value="AAP21213.1"/>
    <property type="molecule type" value="mRNA"/>
</dbReference>
<dbReference type="PIR" id="C84536">
    <property type="entry name" value="C84536"/>
</dbReference>
<dbReference type="RefSeq" id="NP_179204.1">
    <property type="nucleotide sequence ID" value="NM_127165.4"/>
</dbReference>
<dbReference type="PDB" id="3ZHW">
    <property type="method" value="X-ray"/>
    <property type="resolution" value="2.22 A"/>
    <property type="chains" value="A/B=1-160"/>
</dbReference>
<dbReference type="PDBsum" id="3ZHW"/>
<dbReference type="SMR" id="O24520"/>
<dbReference type="BioGRID" id="1462">
    <property type="interactions" value="1"/>
</dbReference>
<dbReference type="FunCoup" id="O24520">
    <property type="interactions" value="29"/>
</dbReference>
<dbReference type="STRING" id="3702.O24520"/>
<dbReference type="iPTMnet" id="O24520"/>
<dbReference type="SwissPalm" id="O24520"/>
<dbReference type="PaxDb" id="3702-AT2G16060.1"/>
<dbReference type="ProteomicsDB" id="230286"/>
<dbReference type="EnsemblPlants" id="AT2G16060.1">
    <property type="protein sequence ID" value="AT2G16060.1"/>
    <property type="gene ID" value="AT2G16060"/>
</dbReference>
<dbReference type="GeneID" id="816103"/>
<dbReference type="Gramene" id="AT2G16060.1">
    <property type="protein sequence ID" value="AT2G16060.1"/>
    <property type="gene ID" value="AT2G16060"/>
</dbReference>
<dbReference type="KEGG" id="ath:AT2G16060"/>
<dbReference type="Araport" id="AT2G16060"/>
<dbReference type="TAIR" id="AT2G16060">
    <property type="gene designation" value="HB1"/>
</dbReference>
<dbReference type="eggNOG" id="KOG3378">
    <property type="taxonomic scope" value="Eukaryota"/>
</dbReference>
<dbReference type="HOGENOM" id="CLU_003827_11_2_1"/>
<dbReference type="InParanoid" id="O24520"/>
<dbReference type="OMA" id="MRQGYQD"/>
<dbReference type="OrthoDB" id="436496at2759"/>
<dbReference type="PhylomeDB" id="O24520"/>
<dbReference type="EvolutionaryTrace" id="O24520"/>
<dbReference type="PRO" id="PR:O24520"/>
<dbReference type="Proteomes" id="UP000006548">
    <property type="component" value="Chromosome 2"/>
</dbReference>
<dbReference type="ExpressionAtlas" id="O24520">
    <property type="expression patterns" value="baseline and differential"/>
</dbReference>
<dbReference type="GO" id="GO:0005829">
    <property type="term" value="C:cytosol"/>
    <property type="evidence" value="ECO:0007005"/>
    <property type="project" value="TAIR"/>
</dbReference>
<dbReference type="GO" id="GO:0005634">
    <property type="term" value="C:nucleus"/>
    <property type="evidence" value="ECO:0007669"/>
    <property type="project" value="UniProtKB-SubCell"/>
</dbReference>
<dbReference type="GO" id="GO:0009505">
    <property type="term" value="C:plant-type cell wall"/>
    <property type="evidence" value="ECO:0007005"/>
    <property type="project" value="TAIR"/>
</dbReference>
<dbReference type="GO" id="GO:0005886">
    <property type="term" value="C:plasma membrane"/>
    <property type="evidence" value="ECO:0007005"/>
    <property type="project" value="TAIR"/>
</dbReference>
<dbReference type="GO" id="GO:0009506">
    <property type="term" value="C:plasmodesma"/>
    <property type="evidence" value="ECO:0007005"/>
    <property type="project" value="TAIR"/>
</dbReference>
<dbReference type="GO" id="GO:0020037">
    <property type="term" value="F:heme binding"/>
    <property type="evidence" value="ECO:0007669"/>
    <property type="project" value="InterPro"/>
</dbReference>
<dbReference type="GO" id="GO:0046872">
    <property type="term" value="F:metal ion binding"/>
    <property type="evidence" value="ECO:0007669"/>
    <property type="project" value="UniProtKB-KW"/>
</dbReference>
<dbReference type="GO" id="GO:0016491">
    <property type="term" value="F:oxidoreductase activity"/>
    <property type="evidence" value="ECO:0007669"/>
    <property type="project" value="UniProtKB-KW"/>
</dbReference>
<dbReference type="GO" id="GO:0019825">
    <property type="term" value="F:oxygen binding"/>
    <property type="evidence" value="ECO:0000314"/>
    <property type="project" value="TAIR"/>
</dbReference>
<dbReference type="GO" id="GO:0071456">
    <property type="term" value="P:cellular response to hypoxia"/>
    <property type="evidence" value="ECO:0007007"/>
    <property type="project" value="TAIR"/>
</dbReference>
<dbReference type="GO" id="GO:0001666">
    <property type="term" value="P:response to hypoxia"/>
    <property type="evidence" value="ECO:0000304"/>
    <property type="project" value="TAIR"/>
</dbReference>
<dbReference type="CDD" id="cd14784">
    <property type="entry name" value="class1_nsHb-like"/>
    <property type="match status" value="1"/>
</dbReference>
<dbReference type="FunFam" id="1.10.490.10:FF:000008">
    <property type="entry name" value="non-symbiotic hemoglobin 1"/>
    <property type="match status" value="1"/>
</dbReference>
<dbReference type="Gene3D" id="1.10.490.10">
    <property type="entry name" value="Globins"/>
    <property type="match status" value="1"/>
</dbReference>
<dbReference type="InterPro" id="IPR000971">
    <property type="entry name" value="Globin"/>
</dbReference>
<dbReference type="InterPro" id="IPR009050">
    <property type="entry name" value="Globin-like_sf"/>
</dbReference>
<dbReference type="InterPro" id="IPR012292">
    <property type="entry name" value="Globin/Proto"/>
</dbReference>
<dbReference type="InterPro" id="IPR001032">
    <property type="entry name" value="Leghaemoglobin-like"/>
</dbReference>
<dbReference type="InterPro" id="IPR019824">
    <property type="entry name" value="Leghaemoglobin_Fe_BS"/>
</dbReference>
<dbReference type="PANTHER" id="PTHR22924">
    <property type="entry name" value="LEGHEMOGLOBIN-RELATED"/>
    <property type="match status" value="1"/>
</dbReference>
<dbReference type="PANTHER" id="PTHR22924:SF39">
    <property type="entry name" value="NON-SYMBIOTIC HEMOGLOBIN 1"/>
    <property type="match status" value="1"/>
</dbReference>
<dbReference type="Pfam" id="PF00042">
    <property type="entry name" value="Globin"/>
    <property type="match status" value="1"/>
</dbReference>
<dbReference type="PRINTS" id="PR00188">
    <property type="entry name" value="PLANTGLOBIN"/>
</dbReference>
<dbReference type="SUPFAM" id="SSF46458">
    <property type="entry name" value="Globin-like"/>
    <property type="match status" value="1"/>
</dbReference>
<dbReference type="PROSITE" id="PS01033">
    <property type="entry name" value="GLOBIN"/>
    <property type="match status" value="1"/>
</dbReference>
<dbReference type="PROSITE" id="PS00208">
    <property type="entry name" value="PLANT_GLOBIN"/>
    <property type="match status" value="1"/>
</dbReference>
<reference key="1">
    <citation type="journal article" date="1997" name="Proc. Natl. Acad. Sci. U.S.A.">
        <title>Two hemoglobin genes in Arabidopsis thaliana: the evolutionary origins of leghemoglobins.</title>
        <authorList>
            <person name="Trevaskis B."/>
            <person name="Watts R.A."/>
            <person name="Andersson C.R."/>
            <person name="Llewellyn D.J."/>
            <person name="Hargrove M.S."/>
            <person name="Olson J.S."/>
            <person name="Dennis E.S."/>
            <person name="Peacock W.J."/>
        </authorList>
    </citation>
    <scope>NUCLEOTIDE SEQUENCE [GENOMIC DNA]</scope>
    <scope>CHARACTERIZATION</scope>
    <scope>INDUCTION BY LOW OXYGEN LEVELS</scope>
    <scope>TISSUE SPECIFICITY</scope>
    <source>
        <strain>cv. C24</strain>
    </source>
</reference>
<reference key="2">
    <citation type="journal article" date="1999" name="Nature">
        <title>Sequence and analysis of chromosome 2 of the plant Arabidopsis thaliana.</title>
        <authorList>
            <person name="Lin X."/>
            <person name="Kaul S."/>
            <person name="Rounsley S.D."/>
            <person name="Shea T.P."/>
            <person name="Benito M.-I."/>
            <person name="Town C.D."/>
            <person name="Fujii C.Y."/>
            <person name="Mason T.M."/>
            <person name="Bowman C.L."/>
            <person name="Barnstead M.E."/>
            <person name="Feldblyum T.V."/>
            <person name="Buell C.R."/>
            <person name="Ketchum K.A."/>
            <person name="Lee J.J."/>
            <person name="Ronning C.M."/>
            <person name="Koo H.L."/>
            <person name="Moffat K.S."/>
            <person name="Cronin L.A."/>
            <person name="Shen M."/>
            <person name="Pai G."/>
            <person name="Van Aken S."/>
            <person name="Umayam L."/>
            <person name="Tallon L.J."/>
            <person name="Gill J.E."/>
            <person name="Adams M.D."/>
            <person name="Carrera A.J."/>
            <person name="Creasy T.H."/>
            <person name="Goodman H.M."/>
            <person name="Somerville C.R."/>
            <person name="Copenhaver G.P."/>
            <person name="Preuss D."/>
            <person name="Nierman W.C."/>
            <person name="White O."/>
            <person name="Eisen J.A."/>
            <person name="Salzberg S.L."/>
            <person name="Fraser C.M."/>
            <person name="Venter J.C."/>
        </authorList>
    </citation>
    <scope>NUCLEOTIDE SEQUENCE [LARGE SCALE GENOMIC DNA]</scope>
    <source>
        <strain>cv. Columbia</strain>
    </source>
</reference>
<reference key="3">
    <citation type="journal article" date="2017" name="Plant J.">
        <title>Araport11: a complete reannotation of the Arabidopsis thaliana reference genome.</title>
        <authorList>
            <person name="Cheng C.Y."/>
            <person name="Krishnakumar V."/>
            <person name="Chan A.P."/>
            <person name="Thibaud-Nissen F."/>
            <person name="Schobel S."/>
            <person name="Town C.D."/>
        </authorList>
    </citation>
    <scope>GENOME REANNOTATION</scope>
    <source>
        <strain>cv. Columbia</strain>
    </source>
</reference>
<reference key="4">
    <citation type="journal article" date="2003" name="Science">
        <title>Empirical analysis of transcriptional activity in the Arabidopsis genome.</title>
        <authorList>
            <person name="Yamada K."/>
            <person name="Lim J."/>
            <person name="Dale J.M."/>
            <person name="Chen H."/>
            <person name="Shinn P."/>
            <person name="Palm C.J."/>
            <person name="Southwick A.M."/>
            <person name="Wu H.C."/>
            <person name="Kim C.J."/>
            <person name="Nguyen M."/>
            <person name="Pham P.K."/>
            <person name="Cheuk R.F."/>
            <person name="Karlin-Newmann G."/>
            <person name="Liu S.X."/>
            <person name="Lam B."/>
            <person name="Sakano H."/>
            <person name="Wu T."/>
            <person name="Yu G."/>
            <person name="Miranda M."/>
            <person name="Quach H.L."/>
            <person name="Tripp M."/>
            <person name="Chang C.H."/>
            <person name="Lee J.M."/>
            <person name="Toriumi M.J."/>
            <person name="Chan M.M."/>
            <person name="Tang C.C."/>
            <person name="Onodera C.S."/>
            <person name="Deng J.M."/>
            <person name="Akiyama K."/>
            <person name="Ansari Y."/>
            <person name="Arakawa T."/>
            <person name="Banh J."/>
            <person name="Banno F."/>
            <person name="Bowser L."/>
            <person name="Brooks S.Y."/>
            <person name="Carninci P."/>
            <person name="Chao Q."/>
            <person name="Choy N."/>
            <person name="Enju A."/>
            <person name="Goldsmith A.D."/>
            <person name="Gurjal M."/>
            <person name="Hansen N.F."/>
            <person name="Hayashizaki Y."/>
            <person name="Johnson-Hopson C."/>
            <person name="Hsuan V.W."/>
            <person name="Iida K."/>
            <person name="Karnes M."/>
            <person name="Khan S."/>
            <person name="Koesema E."/>
            <person name="Ishida J."/>
            <person name="Jiang P.X."/>
            <person name="Jones T."/>
            <person name="Kawai J."/>
            <person name="Kamiya A."/>
            <person name="Meyers C."/>
            <person name="Nakajima M."/>
            <person name="Narusaka M."/>
            <person name="Seki M."/>
            <person name="Sakurai T."/>
            <person name="Satou M."/>
            <person name="Tamse R."/>
            <person name="Vaysberg M."/>
            <person name="Wallender E.K."/>
            <person name="Wong C."/>
            <person name="Yamamura Y."/>
            <person name="Yuan S."/>
            <person name="Shinozaki K."/>
            <person name="Davis R.W."/>
            <person name="Theologis A."/>
            <person name="Ecker J.R."/>
        </authorList>
    </citation>
    <scope>NUCLEOTIDE SEQUENCE [LARGE SCALE MRNA]</scope>
    <source>
        <strain>cv. Columbia</strain>
    </source>
</reference>
<reference key="5">
    <citation type="journal article" date="2013" name="Biochim. Biophys. Acta">
        <title>X-ray crystallographic structural characteristics of Arabidopsis hemoglobin I and their functional implications.</title>
        <authorList>
            <person name="Mukhi N."/>
            <person name="Dhindwal S."/>
            <person name="Uppal S."/>
            <person name="Kumar P."/>
            <person name="Kaur J."/>
            <person name="Kundu S."/>
        </authorList>
    </citation>
    <scope>X-RAY CRYSTALLOGRAPHY (2.22 ANGSTROMS) IN COMPLEX WITH HEME B</scope>
    <scope>HOMODIMER</scope>
    <scope>COFACTOR</scope>
</reference>
<evidence type="ECO:0000250" key="1">
    <source>
        <dbReference type="UniProtKB" id="A2XE98"/>
    </source>
</evidence>
<evidence type="ECO:0000250" key="2">
    <source>
        <dbReference type="UniProtKB" id="O04986"/>
    </source>
</evidence>
<evidence type="ECO:0000250" key="3">
    <source>
        <dbReference type="UniProtKB" id="P68168"/>
    </source>
</evidence>
<evidence type="ECO:0000250" key="4">
    <source>
        <dbReference type="UniProtKB" id="Q42831"/>
    </source>
</evidence>
<evidence type="ECO:0000255" key="5">
    <source>
        <dbReference type="PROSITE-ProRule" id="PRU00238"/>
    </source>
</evidence>
<evidence type="ECO:0000269" key="6">
    <source>
    </source>
</evidence>
<evidence type="ECO:0000269" key="7">
    <source>
    </source>
</evidence>
<evidence type="ECO:0000303" key="8">
    <source>
    </source>
</evidence>
<evidence type="ECO:0000305" key="9"/>
<evidence type="ECO:0000312" key="10">
    <source>
        <dbReference type="Araport" id="AT2G16060"/>
    </source>
</evidence>
<evidence type="ECO:0000312" key="11">
    <source>
        <dbReference type="EMBL" id="AAD26949.1"/>
    </source>
</evidence>
<evidence type="ECO:0007744" key="12">
    <source>
        <dbReference type="PDB" id="3ZHW"/>
    </source>
</evidence>
<evidence type="ECO:0007829" key="13">
    <source>
        <dbReference type="PDB" id="3ZHW"/>
    </source>
</evidence>
<name>HBL1_ARATH</name>
<organism>
    <name type="scientific">Arabidopsis thaliana</name>
    <name type="common">Mouse-ear cress</name>
    <dbReference type="NCBI Taxonomy" id="3702"/>
    <lineage>
        <taxon>Eukaryota</taxon>
        <taxon>Viridiplantae</taxon>
        <taxon>Streptophyta</taxon>
        <taxon>Embryophyta</taxon>
        <taxon>Tracheophyta</taxon>
        <taxon>Spermatophyta</taxon>
        <taxon>Magnoliopsida</taxon>
        <taxon>eudicotyledons</taxon>
        <taxon>Gunneridae</taxon>
        <taxon>Pentapetalae</taxon>
        <taxon>rosids</taxon>
        <taxon>malvids</taxon>
        <taxon>Brassicales</taxon>
        <taxon>Brassicaceae</taxon>
        <taxon>Camelineae</taxon>
        <taxon>Arabidopsis</taxon>
    </lineage>
</organism>
<protein>
    <recommendedName>
        <fullName evidence="2">Anaerobic nitrite reductase AHB1</fullName>
        <ecNumber evidence="2">1.7.2.-</ecNumber>
    </recommendedName>
    <alternativeName>
        <fullName>ARAth GLB1</fullName>
        <shortName evidence="8">Hb1</shortName>
    </alternativeName>
    <alternativeName>
        <fullName evidence="8">Non-symbiotic hemoglobin 1</fullName>
    </alternativeName>
</protein>
<comment type="function">
    <text evidence="2 4">Phytoglobin that reduces nitrite to nitric oxide (NO) under anoxic conditions (e.g. during flooding or in waterlogged soil) (By similarity). May not function as an oxygen storage or transport protein (By similarity). Has an unusually high affinity for O(2) through an hexacoordinate heme iron because of a very low dissociation constant (By similarity).</text>
</comment>
<comment type="catalytic activity">
    <reaction evidence="2">
        <text>Fe(III)-heme b-[protein] + nitric oxide + H2O = Fe(II)-heme b-[protein] + nitrite + 2 H(+)</text>
        <dbReference type="Rhea" id="RHEA:77711"/>
        <dbReference type="Rhea" id="RHEA-COMP:18975"/>
        <dbReference type="Rhea" id="RHEA-COMP:18976"/>
        <dbReference type="ChEBI" id="CHEBI:15377"/>
        <dbReference type="ChEBI" id="CHEBI:15378"/>
        <dbReference type="ChEBI" id="CHEBI:16301"/>
        <dbReference type="ChEBI" id="CHEBI:16480"/>
        <dbReference type="ChEBI" id="CHEBI:55376"/>
        <dbReference type="ChEBI" id="CHEBI:60344"/>
    </reaction>
    <physiologicalReaction direction="right-to-left" evidence="2">
        <dbReference type="Rhea" id="RHEA:77713"/>
    </physiologicalReaction>
</comment>
<comment type="cofactor">
    <cofactor evidence="6">
        <name>heme b</name>
        <dbReference type="ChEBI" id="CHEBI:60344"/>
    </cofactor>
    <text evidence="6">Binds 1 heme group per subunit.</text>
</comment>
<comment type="subunit">
    <text evidence="6">Homodimer.</text>
</comment>
<comment type="subcellular location">
    <subcellularLocation>
        <location evidence="1">Cytoplasm</location>
    </subcellularLocation>
    <subcellularLocation>
        <location evidence="1">Nucleus</location>
    </subcellularLocation>
</comment>
<comment type="tissue specificity">
    <text evidence="7">Expressed in roots and rosette leaves.</text>
</comment>
<comment type="induction">
    <text evidence="7">By low oxygen levels but not by cold, dehydration, heat shock, wounding or oxidative stress.</text>
</comment>
<comment type="similarity">
    <text evidence="9">Belongs to the plant globin family.</text>
</comment>
<keyword id="KW-0002">3D-structure</keyword>
<keyword id="KW-0963">Cytoplasm</keyword>
<keyword id="KW-0349">Heme</keyword>
<keyword id="KW-0408">Iron</keyword>
<keyword id="KW-0479">Metal-binding</keyword>
<keyword id="KW-0539">Nucleus</keyword>
<keyword id="KW-0560">Oxidoreductase</keyword>
<keyword id="KW-1185">Reference proteome</keyword>
<feature type="chain" id="PRO_0000193011" description="Anaerobic nitrite reductase AHB1">
    <location>
        <begin position="1"/>
        <end position="160"/>
    </location>
</feature>
<feature type="domain" description="Globin" evidence="5">
    <location>
        <begin position="8"/>
        <end position="157"/>
    </location>
</feature>
<feature type="short sequence motif" description="Homodimerization" evidence="6 12">
    <location>
        <begin position="41"/>
        <end position="45"/>
    </location>
</feature>
<feature type="short sequence motif" description="Homodimerization" evidence="6 12">
    <location>
        <begin position="111"/>
        <end position="123"/>
    </location>
</feature>
<feature type="binding site" evidence="3">
    <location>
        <position position="51"/>
    </location>
    <ligand>
        <name>heme b</name>
        <dbReference type="ChEBI" id="CHEBI:60344"/>
    </ligand>
</feature>
<feature type="binding site" evidence="6 12">
    <location>
        <position position="65"/>
    </location>
    <ligand>
        <name>heme b</name>
        <dbReference type="ChEBI" id="CHEBI:60344"/>
    </ligand>
</feature>
<feature type="binding site" description="distal binding residue" evidence="5 6 12">
    <location>
        <position position="69"/>
    </location>
    <ligand>
        <name>heme b</name>
        <dbReference type="ChEBI" id="CHEBI:60344"/>
    </ligand>
    <ligandPart>
        <name>Fe</name>
        <dbReference type="ChEBI" id="CHEBI:18248"/>
    </ligandPart>
</feature>
<feature type="binding site" evidence="6 12">
    <location>
        <position position="99"/>
    </location>
    <ligand>
        <name>heme b</name>
        <dbReference type="ChEBI" id="CHEBI:60344"/>
    </ligand>
</feature>
<feature type="binding site" evidence="2">
    <location>
        <position position="103"/>
    </location>
    <ligand>
        <name>heme b</name>
        <dbReference type="ChEBI" id="CHEBI:60344"/>
    </ligand>
</feature>
<feature type="binding site" description="proximal binding residue" evidence="5 6 12">
    <location>
        <position position="104"/>
    </location>
    <ligand>
        <name>heme b</name>
        <dbReference type="ChEBI" id="CHEBI:60344"/>
    </ligand>
    <ligandPart>
        <name>Fe</name>
        <dbReference type="ChEBI" id="CHEBI:18248"/>
    </ligandPart>
</feature>
<feature type="site" description="Homodimerization" evidence="6 12">
    <location>
        <position position="138"/>
    </location>
</feature>
<feature type="helix" evidence="13">
    <location>
        <begin position="11"/>
        <end position="24"/>
    </location>
</feature>
<feature type="helix" evidence="13">
    <location>
        <begin position="25"/>
        <end position="27"/>
    </location>
</feature>
<feature type="helix" evidence="13">
    <location>
        <begin position="28"/>
        <end position="42"/>
    </location>
</feature>
<feature type="helix" evidence="13">
    <location>
        <begin position="44"/>
        <end position="49"/>
    </location>
</feature>
<feature type="strand" evidence="13">
    <location>
        <begin position="50"/>
        <end position="57"/>
    </location>
</feature>
<feature type="helix" evidence="13">
    <location>
        <begin position="60"/>
        <end position="62"/>
    </location>
</feature>
<feature type="helix" evidence="13">
    <location>
        <begin position="66"/>
        <end position="87"/>
    </location>
</feature>
<feature type="helix" evidence="13">
    <location>
        <begin position="94"/>
        <end position="106"/>
    </location>
</feature>
<feature type="helix" evidence="13">
    <location>
        <begin position="111"/>
        <end position="128"/>
    </location>
</feature>
<feature type="turn" evidence="13">
    <location>
        <begin position="130"/>
        <end position="132"/>
    </location>
</feature>
<feature type="helix" evidence="13">
    <location>
        <begin position="135"/>
        <end position="157"/>
    </location>
</feature>
<accession>O24520</accession>
<sequence>MESEGKIVFTEEQEALVVKSWSVMKKNSAELGLKLFIKIFEIAPTTKKMFSFLRDSPIPAEQNPKLKPHAMSVFVMCCESAVQLRKTGKVTVRETTLKRLGASHSKYGVVDEHFEVAKYALLETIKEAVPEMWSPEMKVAWGQAYDHLVAAIKAEMNLSN</sequence>